<comment type="function">
    <text evidence="1">The pyruvate dehydrogenase complex catalyzes the overall conversion of pyruvate to acetyl-CoA and CO(2). It contains multiple copies of three enzymatic components: pyruvate dehydrogenase (E1), dihydrolipoamide acetyltransferase (E2) and lipoamide dehydrogenase (E3) (By similarity).</text>
</comment>
<comment type="catalytic activity">
    <reaction>
        <text>N(6)-[(R)-lipoyl]-L-lysyl-[protein] + pyruvate + H(+) = N(6)-[(R)-S(8)-acetyldihydrolipoyl]-L-lysyl-[protein] + CO2</text>
        <dbReference type="Rhea" id="RHEA:19189"/>
        <dbReference type="Rhea" id="RHEA-COMP:10474"/>
        <dbReference type="Rhea" id="RHEA-COMP:10478"/>
        <dbReference type="ChEBI" id="CHEBI:15361"/>
        <dbReference type="ChEBI" id="CHEBI:15378"/>
        <dbReference type="ChEBI" id="CHEBI:16526"/>
        <dbReference type="ChEBI" id="CHEBI:83099"/>
        <dbReference type="ChEBI" id="CHEBI:83111"/>
        <dbReference type="EC" id="1.2.4.1"/>
    </reaction>
</comment>
<comment type="cofactor">
    <cofactor evidence="1">
        <name>thiamine diphosphate</name>
        <dbReference type="ChEBI" id="CHEBI:58937"/>
    </cofactor>
</comment>
<comment type="subunit">
    <text>Heterodimer of an alpha and a beta chain.</text>
</comment>
<name>ODPA_STAAM</name>
<keyword id="KW-0560">Oxidoreductase</keyword>
<keyword id="KW-0670">Pyruvate</keyword>
<keyword id="KW-0786">Thiamine pyrophosphate</keyword>
<feature type="chain" id="PRO_0000162206" description="Pyruvate dehydrogenase E1 component subunit alpha">
    <location>
        <begin position="1"/>
        <end position="370"/>
    </location>
</feature>
<reference key="1">
    <citation type="journal article" date="2001" name="Lancet">
        <title>Whole genome sequencing of meticillin-resistant Staphylococcus aureus.</title>
        <authorList>
            <person name="Kuroda M."/>
            <person name="Ohta T."/>
            <person name="Uchiyama I."/>
            <person name="Baba T."/>
            <person name="Yuzawa H."/>
            <person name="Kobayashi I."/>
            <person name="Cui L."/>
            <person name="Oguchi A."/>
            <person name="Aoki K."/>
            <person name="Nagai Y."/>
            <person name="Lian J.-Q."/>
            <person name="Ito T."/>
            <person name="Kanamori M."/>
            <person name="Matsumaru H."/>
            <person name="Maruyama A."/>
            <person name="Murakami H."/>
            <person name="Hosoyama A."/>
            <person name="Mizutani-Ui Y."/>
            <person name="Takahashi N.K."/>
            <person name="Sawano T."/>
            <person name="Inoue R."/>
            <person name="Kaito C."/>
            <person name="Sekimizu K."/>
            <person name="Hirakawa H."/>
            <person name="Kuhara S."/>
            <person name="Goto S."/>
            <person name="Yabuzaki J."/>
            <person name="Kanehisa M."/>
            <person name="Yamashita A."/>
            <person name="Oshima K."/>
            <person name="Furuya K."/>
            <person name="Yoshino C."/>
            <person name="Shiba T."/>
            <person name="Hattori M."/>
            <person name="Ogasawara N."/>
            <person name="Hayashi H."/>
            <person name="Hiramatsu K."/>
        </authorList>
    </citation>
    <scope>NUCLEOTIDE SEQUENCE [LARGE SCALE GENOMIC DNA]</scope>
    <source>
        <strain>Mu50 / ATCC 700699</strain>
    </source>
</reference>
<proteinExistence type="inferred from homology"/>
<sequence>MAPKLQAQFDAVKVLNDTQSKFEMVQILDENGNVVNEDLVPDLTDEQLVELMERMVWTRILDQRSISLNRQGRLGFYAPTAGQEASQLASQYALEKEDYILPGYRDVPQIIWHGLPLTEAFLFSRGHFKGNQFPEGVNALSPQIIIGAQYIQAAGVAFALKKRGKNAVAITYTGDGGSSQGDFYEGINFAAAYKAPAIFVIQNNNYAISTPRSKQTAAETLAQKAIAVGIPGIQVDGMDALAVYQATKEARDRAVAGEGPTLIETMTYRYGPHTMAGDDPTRYRTSDEDAEWEKKDPLVRFRKFLENKGLWNEDKENEVIERAKADIKAAIKEADNTEKQTVTSLMEIMYEDMPQNLAEQYEIYKEKESK</sequence>
<accession>P60089</accession>
<accession>Q931U0</accession>
<evidence type="ECO:0000250" key="1"/>
<gene>
    <name type="primary">pdhA</name>
    <name type="ordered locus">SAV1093</name>
</gene>
<dbReference type="EC" id="1.2.4.1"/>
<dbReference type="EMBL" id="BA000017">
    <property type="protein sequence ID" value="BAB57255.1"/>
    <property type="molecule type" value="Genomic_DNA"/>
</dbReference>
<dbReference type="RefSeq" id="WP_000035320.1">
    <property type="nucleotide sequence ID" value="NC_002758.2"/>
</dbReference>
<dbReference type="SMR" id="P60089"/>
<dbReference type="KEGG" id="sav:SAV1093"/>
<dbReference type="HOGENOM" id="CLU_029393_1_0_9"/>
<dbReference type="PhylomeDB" id="P60089"/>
<dbReference type="Proteomes" id="UP000002481">
    <property type="component" value="Chromosome"/>
</dbReference>
<dbReference type="GO" id="GO:0004739">
    <property type="term" value="F:pyruvate dehydrogenase (acetyl-transferring) activity"/>
    <property type="evidence" value="ECO:0007669"/>
    <property type="project" value="UniProtKB-EC"/>
</dbReference>
<dbReference type="GO" id="GO:0009083">
    <property type="term" value="P:branched-chain amino acid catabolic process"/>
    <property type="evidence" value="ECO:0007669"/>
    <property type="project" value="TreeGrafter"/>
</dbReference>
<dbReference type="CDD" id="cd02000">
    <property type="entry name" value="TPP_E1_PDC_ADC_BCADC"/>
    <property type="match status" value="1"/>
</dbReference>
<dbReference type="FunFam" id="3.40.50.970:FF:000023">
    <property type="entry name" value="Pyruvate dehydrogenase E1 component subunit alpha"/>
    <property type="match status" value="1"/>
</dbReference>
<dbReference type="Gene3D" id="3.40.50.970">
    <property type="match status" value="1"/>
</dbReference>
<dbReference type="InterPro" id="IPR050771">
    <property type="entry name" value="Alpha-ketoacid_DH_E1_comp"/>
</dbReference>
<dbReference type="InterPro" id="IPR001017">
    <property type="entry name" value="DH_E1"/>
</dbReference>
<dbReference type="InterPro" id="IPR017596">
    <property type="entry name" value="PdhA/BkdA"/>
</dbReference>
<dbReference type="InterPro" id="IPR029061">
    <property type="entry name" value="THDP-binding"/>
</dbReference>
<dbReference type="NCBIfam" id="TIGR03181">
    <property type="entry name" value="PDH_E1_alph_x"/>
    <property type="match status" value="1"/>
</dbReference>
<dbReference type="PANTHER" id="PTHR43380">
    <property type="entry name" value="2-OXOISOVALERATE DEHYDROGENASE SUBUNIT ALPHA, MITOCHONDRIAL"/>
    <property type="match status" value="1"/>
</dbReference>
<dbReference type="PANTHER" id="PTHR43380:SF1">
    <property type="entry name" value="2-OXOISOVALERATE DEHYDROGENASE SUBUNIT ALPHA, MITOCHONDRIAL"/>
    <property type="match status" value="1"/>
</dbReference>
<dbReference type="Pfam" id="PF00676">
    <property type="entry name" value="E1_dh"/>
    <property type="match status" value="1"/>
</dbReference>
<dbReference type="SUPFAM" id="SSF52518">
    <property type="entry name" value="Thiamin diphosphate-binding fold (THDP-binding)"/>
    <property type="match status" value="1"/>
</dbReference>
<protein>
    <recommendedName>
        <fullName>Pyruvate dehydrogenase E1 component subunit alpha</fullName>
        <ecNumber>1.2.4.1</ecNumber>
    </recommendedName>
</protein>
<organism>
    <name type="scientific">Staphylococcus aureus (strain Mu50 / ATCC 700699)</name>
    <dbReference type="NCBI Taxonomy" id="158878"/>
    <lineage>
        <taxon>Bacteria</taxon>
        <taxon>Bacillati</taxon>
        <taxon>Bacillota</taxon>
        <taxon>Bacilli</taxon>
        <taxon>Bacillales</taxon>
        <taxon>Staphylococcaceae</taxon>
        <taxon>Staphylococcus</taxon>
    </lineage>
</organism>